<organism>
    <name type="scientific">Neurospora crassa (strain ATCC 24698 / 74-OR23-1A / CBS 708.71 / DSM 1257 / FGSC 987)</name>
    <dbReference type="NCBI Taxonomy" id="367110"/>
    <lineage>
        <taxon>Eukaryota</taxon>
        <taxon>Fungi</taxon>
        <taxon>Dikarya</taxon>
        <taxon>Ascomycota</taxon>
        <taxon>Pezizomycotina</taxon>
        <taxon>Sordariomycetes</taxon>
        <taxon>Sordariomycetidae</taxon>
        <taxon>Sordariales</taxon>
        <taxon>Sordariaceae</taxon>
        <taxon>Neurospora</taxon>
    </lineage>
</organism>
<feature type="chain" id="PRO_0000324893" description="Protein pxr-1">
    <location>
        <begin position="1"/>
        <end position="369"/>
    </location>
</feature>
<feature type="domain" description="G-patch" evidence="2">
    <location>
        <begin position="25"/>
        <end position="79"/>
    </location>
</feature>
<feature type="region of interest" description="Disordered" evidence="3">
    <location>
        <begin position="1"/>
        <end position="23"/>
    </location>
</feature>
<feature type="region of interest" description="Disordered" evidence="3">
    <location>
        <begin position="147"/>
        <end position="338"/>
    </location>
</feature>
<feature type="compositionally biased region" description="Polar residues" evidence="3">
    <location>
        <begin position="153"/>
        <end position="167"/>
    </location>
</feature>
<feature type="compositionally biased region" description="Basic residues" evidence="3">
    <location>
        <begin position="218"/>
        <end position="227"/>
    </location>
</feature>
<feature type="compositionally biased region" description="Basic and acidic residues" evidence="3">
    <location>
        <begin position="228"/>
        <end position="237"/>
    </location>
</feature>
<feature type="compositionally biased region" description="Basic residues" evidence="3">
    <location>
        <begin position="267"/>
        <end position="292"/>
    </location>
</feature>
<feature type="compositionally biased region" description="Basic and acidic residues" evidence="3">
    <location>
        <begin position="304"/>
        <end position="318"/>
    </location>
</feature>
<feature type="compositionally biased region" description="Low complexity" evidence="3">
    <location>
        <begin position="322"/>
        <end position="338"/>
    </location>
</feature>
<protein>
    <recommendedName>
        <fullName>Protein pxr-1</fullName>
    </recommendedName>
    <alternativeName>
        <fullName>PinX1-related protein 1</fullName>
    </alternativeName>
</protein>
<comment type="function">
    <text evidence="1">Involved in rRNA-processing at A0, A1 and A2 sites and negatively regulates telomerase.</text>
</comment>
<comment type="subcellular location">
    <subcellularLocation>
        <location evidence="1">Nucleus</location>
        <location evidence="1">Nucleolus</location>
    </subcellularLocation>
</comment>
<comment type="similarity">
    <text evidence="4">Belongs to the PINX1 family.</text>
</comment>
<reference key="1">
    <citation type="journal article" date="2003" name="Nature">
        <title>The genome sequence of the filamentous fungus Neurospora crassa.</title>
        <authorList>
            <person name="Galagan J.E."/>
            <person name="Calvo S.E."/>
            <person name="Borkovich K.A."/>
            <person name="Selker E.U."/>
            <person name="Read N.D."/>
            <person name="Jaffe D.B."/>
            <person name="FitzHugh W."/>
            <person name="Ma L.-J."/>
            <person name="Smirnov S."/>
            <person name="Purcell S."/>
            <person name="Rehman B."/>
            <person name="Elkins T."/>
            <person name="Engels R."/>
            <person name="Wang S."/>
            <person name="Nielsen C.B."/>
            <person name="Butler J."/>
            <person name="Endrizzi M."/>
            <person name="Qui D."/>
            <person name="Ianakiev P."/>
            <person name="Bell-Pedersen D."/>
            <person name="Nelson M.A."/>
            <person name="Werner-Washburne M."/>
            <person name="Selitrennikoff C.P."/>
            <person name="Kinsey J.A."/>
            <person name="Braun E.L."/>
            <person name="Zelter A."/>
            <person name="Schulte U."/>
            <person name="Kothe G.O."/>
            <person name="Jedd G."/>
            <person name="Mewes H.-W."/>
            <person name="Staben C."/>
            <person name="Marcotte E."/>
            <person name="Greenberg D."/>
            <person name="Roy A."/>
            <person name="Foley K."/>
            <person name="Naylor J."/>
            <person name="Stange-Thomann N."/>
            <person name="Barrett R."/>
            <person name="Gnerre S."/>
            <person name="Kamal M."/>
            <person name="Kamvysselis M."/>
            <person name="Mauceli E.W."/>
            <person name="Bielke C."/>
            <person name="Rudd S."/>
            <person name="Frishman D."/>
            <person name="Krystofova S."/>
            <person name="Rasmussen C."/>
            <person name="Metzenberg R.L."/>
            <person name="Perkins D.D."/>
            <person name="Kroken S."/>
            <person name="Cogoni C."/>
            <person name="Macino G."/>
            <person name="Catcheside D.E.A."/>
            <person name="Li W."/>
            <person name="Pratt R.J."/>
            <person name="Osmani S.A."/>
            <person name="DeSouza C.P.C."/>
            <person name="Glass N.L."/>
            <person name="Orbach M.J."/>
            <person name="Berglund J.A."/>
            <person name="Voelker R."/>
            <person name="Yarden O."/>
            <person name="Plamann M."/>
            <person name="Seiler S."/>
            <person name="Dunlap J.C."/>
            <person name="Radford A."/>
            <person name="Aramayo R."/>
            <person name="Natvig D.O."/>
            <person name="Alex L.A."/>
            <person name="Mannhaupt G."/>
            <person name="Ebbole D.J."/>
            <person name="Freitag M."/>
            <person name="Paulsen I."/>
            <person name="Sachs M.S."/>
            <person name="Lander E.S."/>
            <person name="Nusbaum C."/>
            <person name="Birren B.W."/>
        </authorList>
    </citation>
    <scope>NUCLEOTIDE SEQUENCE [LARGE SCALE GENOMIC DNA]</scope>
    <source>
        <strain>ATCC 24698 / 74-OR23-1A / CBS 708.71 / DSM 1257 / FGSC 987</strain>
    </source>
</reference>
<gene>
    <name type="primary">pxr-1</name>
    <name type="ORF">NCU02528</name>
</gene>
<dbReference type="EMBL" id="CM002236">
    <property type="protein sequence ID" value="EAA36423.1"/>
    <property type="molecule type" value="Genomic_DNA"/>
</dbReference>
<dbReference type="RefSeq" id="XP_965659.1">
    <property type="nucleotide sequence ID" value="XM_960566.2"/>
</dbReference>
<dbReference type="STRING" id="367110.Q7SHT5"/>
<dbReference type="PaxDb" id="5141-EFNCRP00000002062"/>
<dbReference type="EnsemblFungi" id="EAA36423">
    <property type="protein sequence ID" value="EAA36423"/>
    <property type="gene ID" value="NCU02528"/>
</dbReference>
<dbReference type="GeneID" id="3881857"/>
<dbReference type="KEGG" id="ncr:NCU02528"/>
<dbReference type="VEuPathDB" id="FungiDB:NCU02528"/>
<dbReference type="HOGENOM" id="CLU_052839_0_0_1"/>
<dbReference type="InParanoid" id="Q7SHT5"/>
<dbReference type="OrthoDB" id="29523at2759"/>
<dbReference type="Proteomes" id="UP000001805">
    <property type="component" value="Chromosome 1, Linkage Group I"/>
</dbReference>
<dbReference type="GO" id="GO:0005730">
    <property type="term" value="C:nucleolus"/>
    <property type="evidence" value="ECO:0007669"/>
    <property type="project" value="UniProtKB-SubCell"/>
</dbReference>
<dbReference type="GO" id="GO:0003676">
    <property type="term" value="F:nucleic acid binding"/>
    <property type="evidence" value="ECO:0007669"/>
    <property type="project" value="InterPro"/>
</dbReference>
<dbReference type="GO" id="GO:0006364">
    <property type="term" value="P:rRNA processing"/>
    <property type="evidence" value="ECO:0007669"/>
    <property type="project" value="UniProtKB-KW"/>
</dbReference>
<dbReference type="InterPro" id="IPR000467">
    <property type="entry name" value="G_patch_dom"/>
</dbReference>
<dbReference type="InterPro" id="IPR050656">
    <property type="entry name" value="PINX1"/>
</dbReference>
<dbReference type="PANTHER" id="PTHR23149">
    <property type="entry name" value="G PATCH DOMAIN CONTAINING PROTEIN"/>
    <property type="match status" value="1"/>
</dbReference>
<dbReference type="PANTHER" id="PTHR23149:SF31">
    <property type="entry name" value="PROTEIN PXR1"/>
    <property type="match status" value="1"/>
</dbReference>
<dbReference type="Pfam" id="PF01585">
    <property type="entry name" value="G-patch"/>
    <property type="match status" value="1"/>
</dbReference>
<dbReference type="SMART" id="SM00443">
    <property type="entry name" value="G_patch"/>
    <property type="match status" value="1"/>
</dbReference>
<dbReference type="PROSITE" id="PS50174">
    <property type="entry name" value="G_PATCH"/>
    <property type="match status" value="1"/>
</dbReference>
<evidence type="ECO:0000250" key="1"/>
<evidence type="ECO:0000255" key="2">
    <source>
        <dbReference type="PROSITE-ProRule" id="PRU00092"/>
    </source>
</evidence>
<evidence type="ECO:0000256" key="3">
    <source>
        <dbReference type="SAM" id="MobiDB-lite"/>
    </source>
</evidence>
<evidence type="ECO:0000305" key="4"/>
<proteinExistence type="inferred from homology"/>
<sequence>MGLAAAKNKRKLGTDPNNTKWSRNETTFGQKILRAQGWQPGEFLGAKDAAHAVHHTEASSSHIKVTLKDDNLGLGAKRNNGDECTGLFDFQHLLGRLNGKSEDVLEAEKQKRENHIRNHYLEQKIGTIRFVRGGWLVGDVVKEKVTEEDGVPQSDTVDQQVETVPSQDTKDAEPTKRKSKKRKADSDEEDEKEEKKDKKVKKRKTDTEAETDSESSRSKKKEKKDKKEKKDQKEKKDKKDKRKLKDAKQSEESSSDDLESSATETKKSKKDKKKEKKEKKDKKKDKKEKKRKEKELSDSATESEDSKSKAQKRTKDGAEIETSTPGGSGTSTPTVTSSTRFLARQRFIAQKKMAFTDSAALNQIFMIKS</sequence>
<accession>Q7SHT5</accession>
<keyword id="KW-0539">Nucleus</keyword>
<keyword id="KW-1185">Reference proteome</keyword>
<keyword id="KW-0690">Ribosome biogenesis</keyword>
<keyword id="KW-0698">rRNA processing</keyword>
<name>PXR1_NEUCR</name>